<proteinExistence type="evidence at transcript level"/>
<keyword id="KW-0025">Alternative splicing</keyword>
<keyword id="KW-0963">Cytoplasm</keyword>
<keyword id="KW-0238">DNA-binding</keyword>
<keyword id="KW-1017">Isopeptide bond</keyword>
<keyword id="KW-0479">Metal-binding</keyword>
<keyword id="KW-0539">Nucleus</keyword>
<keyword id="KW-1185">Reference proteome</keyword>
<keyword id="KW-0677">Repeat</keyword>
<keyword id="KW-0691">RNA editing</keyword>
<keyword id="KW-0694">RNA-binding</keyword>
<keyword id="KW-0804">Transcription</keyword>
<keyword id="KW-0805">Transcription regulation</keyword>
<keyword id="KW-0043">Tumor suppressor</keyword>
<keyword id="KW-0832">Ubl conjugation</keyword>
<keyword id="KW-0862">Zinc</keyword>
<keyword id="KW-0863">Zinc-finger</keyword>
<reference key="1">
    <citation type="journal article" date="1992" name="Cancer Res.">
        <title>Molecular cloning of rat Wilms' tumor complementary DNA and a study of messenger RNA expression in the urogenital system and the brain.</title>
        <authorList>
            <person name="Sharma P.M."/>
            <person name="Yang X."/>
            <person name="Bowman M."/>
            <person name="Roberts V."/>
            <person name="Sukumar S."/>
        </authorList>
    </citation>
    <scope>NUCLEOTIDE SEQUENCE [MRNA] (ISOFORMS 1; 2; 3 AND 4)</scope>
    <source>
        <strain>Sprague-Dawley</strain>
        <tissue>Kidney</tissue>
    </source>
</reference>
<reference key="2">
    <citation type="journal article" date="1994" name="Genes Dev.">
        <title>RNA editing in the Wilms' tumor susceptibility gene, WT1.</title>
        <authorList>
            <person name="Sharma P.M."/>
            <person name="Bowman M."/>
            <person name="Madden S.L."/>
            <person name="Rauscher F.J. III"/>
            <person name="Sukumar S."/>
        </authorList>
    </citation>
    <scope>RNA EDITING OF POSITION 280</scope>
</reference>
<protein>
    <recommendedName>
        <fullName>Wilms tumor protein homolog</fullName>
    </recommendedName>
</protein>
<evidence type="ECO:0000250" key="1"/>
<evidence type="ECO:0000250" key="2">
    <source>
        <dbReference type="UniProtKB" id="P19544"/>
    </source>
</evidence>
<evidence type="ECO:0000255" key="3">
    <source>
        <dbReference type="PROSITE-ProRule" id="PRU00042"/>
    </source>
</evidence>
<evidence type="ECO:0000256" key="4">
    <source>
        <dbReference type="SAM" id="MobiDB-lite"/>
    </source>
</evidence>
<evidence type="ECO:0000269" key="5">
    <source>
    </source>
</evidence>
<evidence type="ECO:0000303" key="6">
    <source>
    </source>
</evidence>
<evidence type="ECO:0000305" key="7"/>
<name>WT1_RAT</name>
<dbReference type="EMBL" id="X69716">
    <property type="protein sequence ID" value="CAA49373.1"/>
    <property type="molecule type" value="mRNA"/>
</dbReference>
<dbReference type="PIR" id="S33926">
    <property type="entry name" value="S33926"/>
</dbReference>
<dbReference type="RefSeq" id="NP_113722.2">
    <property type="nucleotide sequence ID" value="NM_031534.2"/>
</dbReference>
<dbReference type="BMRB" id="P49952"/>
<dbReference type="SMR" id="P49952"/>
<dbReference type="BioGRID" id="246993">
    <property type="interactions" value="1"/>
</dbReference>
<dbReference type="FunCoup" id="P49952">
    <property type="interactions" value="73"/>
</dbReference>
<dbReference type="STRING" id="10116.ENSRNOP00000060038"/>
<dbReference type="PhosphoSitePlus" id="P49952"/>
<dbReference type="PaxDb" id="10116-ENSRNOP00000060038"/>
<dbReference type="GeneID" id="24883"/>
<dbReference type="KEGG" id="rno:24883"/>
<dbReference type="UCSC" id="RGD:3974">
    <molecule id="P49952-1"/>
    <property type="organism name" value="rat"/>
</dbReference>
<dbReference type="AGR" id="RGD:3974"/>
<dbReference type="CTD" id="7490"/>
<dbReference type="RGD" id="3974">
    <property type="gene designation" value="Wt1"/>
</dbReference>
<dbReference type="eggNOG" id="KOG1721">
    <property type="taxonomic scope" value="Eukaryota"/>
</dbReference>
<dbReference type="InParanoid" id="P49952"/>
<dbReference type="OrthoDB" id="32510at9989"/>
<dbReference type="PhylomeDB" id="P49952"/>
<dbReference type="PRO" id="PR:P49952"/>
<dbReference type="Proteomes" id="UP000002494">
    <property type="component" value="Unplaced"/>
</dbReference>
<dbReference type="GO" id="GO:0005737">
    <property type="term" value="C:cytoplasm"/>
    <property type="evidence" value="ECO:0000250"/>
    <property type="project" value="UniProtKB"/>
</dbReference>
<dbReference type="GO" id="GO:0016607">
    <property type="term" value="C:nuclear speck"/>
    <property type="evidence" value="ECO:0000250"/>
    <property type="project" value="UniProtKB"/>
</dbReference>
<dbReference type="GO" id="GO:0005730">
    <property type="term" value="C:nucleolus"/>
    <property type="evidence" value="ECO:0007669"/>
    <property type="project" value="UniProtKB-SubCell"/>
</dbReference>
<dbReference type="GO" id="GO:0005654">
    <property type="term" value="C:nucleoplasm"/>
    <property type="evidence" value="ECO:0000250"/>
    <property type="project" value="UniProtKB"/>
</dbReference>
<dbReference type="GO" id="GO:0005634">
    <property type="term" value="C:nucleus"/>
    <property type="evidence" value="ECO:0000266"/>
    <property type="project" value="RGD"/>
</dbReference>
<dbReference type="GO" id="GO:0070742">
    <property type="term" value="F:C2H2 zinc finger domain binding"/>
    <property type="evidence" value="ECO:0000250"/>
    <property type="project" value="UniProtKB"/>
</dbReference>
<dbReference type="GO" id="GO:0001228">
    <property type="term" value="F:DNA-binding transcription activator activity, RNA polymerase II-specific"/>
    <property type="evidence" value="ECO:0000250"/>
    <property type="project" value="UniProtKB"/>
</dbReference>
<dbReference type="GO" id="GO:0003700">
    <property type="term" value="F:DNA-binding transcription factor activity"/>
    <property type="evidence" value="ECO:0000250"/>
    <property type="project" value="UniProtKB"/>
</dbReference>
<dbReference type="GO" id="GO:0000981">
    <property type="term" value="F:DNA-binding transcription factor activity, RNA polymerase II-specific"/>
    <property type="evidence" value="ECO:0000318"/>
    <property type="project" value="GO_Central"/>
</dbReference>
<dbReference type="GO" id="GO:0003690">
    <property type="term" value="F:double-stranded DNA binding"/>
    <property type="evidence" value="ECO:0000266"/>
    <property type="project" value="RGD"/>
</dbReference>
<dbReference type="GO" id="GO:0010385">
    <property type="term" value="F:double-stranded methylated DNA binding"/>
    <property type="evidence" value="ECO:0000250"/>
    <property type="project" value="UniProtKB"/>
</dbReference>
<dbReference type="GO" id="GO:0044729">
    <property type="term" value="F:hemi-methylated DNA-binding"/>
    <property type="evidence" value="ECO:0000250"/>
    <property type="project" value="UniProtKB"/>
</dbReference>
<dbReference type="GO" id="GO:0003723">
    <property type="term" value="F:RNA binding"/>
    <property type="evidence" value="ECO:0007669"/>
    <property type="project" value="UniProtKB-KW"/>
</dbReference>
<dbReference type="GO" id="GO:0000978">
    <property type="term" value="F:RNA polymerase II cis-regulatory region sequence-specific DNA binding"/>
    <property type="evidence" value="ECO:0000266"/>
    <property type="project" value="RGD"/>
</dbReference>
<dbReference type="GO" id="GO:0043565">
    <property type="term" value="F:sequence-specific DNA binding"/>
    <property type="evidence" value="ECO:0000314"/>
    <property type="project" value="RGD"/>
</dbReference>
<dbReference type="GO" id="GO:0000976">
    <property type="term" value="F:transcription cis-regulatory region binding"/>
    <property type="evidence" value="ECO:0000250"/>
    <property type="project" value="UniProtKB"/>
</dbReference>
<dbReference type="GO" id="GO:0008270">
    <property type="term" value="F:zinc ion binding"/>
    <property type="evidence" value="ECO:0000250"/>
    <property type="project" value="UniProtKB"/>
</dbReference>
<dbReference type="GO" id="GO:0035802">
    <property type="term" value="P:adrenal cortex formation"/>
    <property type="evidence" value="ECO:0000250"/>
    <property type="project" value="UniProtKB"/>
</dbReference>
<dbReference type="GO" id="GO:0030325">
    <property type="term" value="P:adrenal gland development"/>
    <property type="evidence" value="ECO:0000250"/>
    <property type="project" value="UniProtKB"/>
</dbReference>
<dbReference type="GO" id="GO:0006915">
    <property type="term" value="P:apoptotic process"/>
    <property type="evidence" value="ECO:0000266"/>
    <property type="project" value="RGD"/>
</dbReference>
<dbReference type="GO" id="GO:0001658">
    <property type="term" value="P:branching involved in ureteric bud morphogenesis"/>
    <property type="evidence" value="ECO:0000250"/>
    <property type="project" value="UniProtKB"/>
</dbReference>
<dbReference type="GO" id="GO:0043010">
    <property type="term" value="P:camera-type eye development"/>
    <property type="evidence" value="ECO:0000250"/>
    <property type="project" value="UniProtKB"/>
</dbReference>
<dbReference type="GO" id="GO:0060923">
    <property type="term" value="P:cardiac muscle cell fate commitment"/>
    <property type="evidence" value="ECO:0000266"/>
    <property type="project" value="RGD"/>
</dbReference>
<dbReference type="GO" id="GO:0071320">
    <property type="term" value="P:cellular response to cAMP"/>
    <property type="evidence" value="ECO:0000266"/>
    <property type="project" value="RGD"/>
</dbReference>
<dbReference type="GO" id="GO:0071371">
    <property type="term" value="P:cellular response to gonadotropin stimulus"/>
    <property type="evidence" value="ECO:0000250"/>
    <property type="project" value="UniProtKB"/>
</dbReference>
<dbReference type="GO" id="GO:0060539">
    <property type="term" value="P:diaphragm development"/>
    <property type="evidence" value="ECO:0000250"/>
    <property type="project" value="UniProtKB"/>
</dbReference>
<dbReference type="GO" id="GO:0030855">
    <property type="term" value="P:epithelial cell differentiation"/>
    <property type="evidence" value="ECO:0000250"/>
    <property type="project" value="UniProtKB"/>
</dbReference>
<dbReference type="GO" id="GO:0030317">
    <property type="term" value="P:flagellated sperm motility"/>
    <property type="evidence" value="ECO:0000266"/>
    <property type="project" value="RGD"/>
</dbReference>
<dbReference type="GO" id="GO:0007281">
    <property type="term" value="P:germ cell development"/>
    <property type="evidence" value="ECO:0000250"/>
    <property type="project" value="UniProtKB"/>
</dbReference>
<dbReference type="GO" id="GO:0032836">
    <property type="term" value="P:glomerular basement membrane development"/>
    <property type="evidence" value="ECO:0000250"/>
    <property type="project" value="UniProtKB"/>
</dbReference>
<dbReference type="GO" id="GO:0032835">
    <property type="term" value="P:glomerulus development"/>
    <property type="evidence" value="ECO:0000250"/>
    <property type="project" value="UniProtKB"/>
</dbReference>
<dbReference type="GO" id="GO:0008406">
    <property type="term" value="P:gonad development"/>
    <property type="evidence" value="ECO:0000250"/>
    <property type="project" value="UniProtKB"/>
</dbReference>
<dbReference type="GO" id="GO:0007507">
    <property type="term" value="P:heart development"/>
    <property type="evidence" value="ECO:0000250"/>
    <property type="project" value="UniProtKB"/>
</dbReference>
<dbReference type="GO" id="GO:0001822">
    <property type="term" value="P:kidney development"/>
    <property type="evidence" value="ECO:0000266"/>
    <property type="project" value="RGD"/>
</dbReference>
<dbReference type="GO" id="GO:0030539">
    <property type="term" value="P:male genitalia development"/>
    <property type="evidence" value="ECO:0000250"/>
    <property type="project" value="UniProtKB"/>
</dbReference>
<dbReference type="GO" id="GO:0008584">
    <property type="term" value="P:male gonad development"/>
    <property type="evidence" value="ECO:0000266"/>
    <property type="project" value="RGD"/>
</dbReference>
<dbReference type="GO" id="GO:1900200">
    <property type="term" value="P:mesenchymal cell apoptotic process involved in metanephros development"/>
    <property type="evidence" value="ECO:0000266"/>
    <property type="project" value="RGD"/>
</dbReference>
<dbReference type="GO" id="GO:0060231">
    <property type="term" value="P:mesenchymal to epithelial transition"/>
    <property type="evidence" value="ECO:0000250"/>
    <property type="project" value="UniProtKB"/>
</dbReference>
<dbReference type="GO" id="GO:0001823">
    <property type="term" value="P:mesonephros development"/>
    <property type="evidence" value="ECO:0000266"/>
    <property type="project" value="RGD"/>
</dbReference>
<dbReference type="GO" id="GO:0072278">
    <property type="term" value="P:metanephric comma-shaped body morphogenesis"/>
    <property type="evidence" value="ECO:0000266"/>
    <property type="project" value="RGD"/>
</dbReference>
<dbReference type="GO" id="GO:0072207">
    <property type="term" value="P:metanephric epithelium development"/>
    <property type="evidence" value="ECO:0000266"/>
    <property type="project" value="RGD"/>
</dbReference>
<dbReference type="GO" id="GO:0072075">
    <property type="term" value="P:metanephric mesenchyme development"/>
    <property type="evidence" value="ECO:0000250"/>
    <property type="project" value="UniProtKB"/>
</dbReference>
<dbReference type="GO" id="GO:0072284">
    <property type="term" value="P:metanephric S-shaped body morphogenesis"/>
    <property type="evidence" value="ECO:0000250"/>
    <property type="project" value="UniProtKB"/>
</dbReference>
<dbReference type="GO" id="GO:0001656">
    <property type="term" value="P:metanephros development"/>
    <property type="evidence" value="ECO:0000266"/>
    <property type="project" value="RGD"/>
</dbReference>
<dbReference type="GO" id="GO:0043066">
    <property type="term" value="P:negative regulation of apoptotic process"/>
    <property type="evidence" value="ECO:0000250"/>
    <property type="project" value="UniProtKB"/>
</dbReference>
<dbReference type="GO" id="GO:0030308">
    <property type="term" value="P:negative regulation of cell growth"/>
    <property type="evidence" value="ECO:0000250"/>
    <property type="project" value="UniProtKB"/>
</dbReference>
<dbReference type="GO" id="GO:0008285">
    <property type="term" value="P:negative regulation of cell population proliferation"/>
    <property type="evidence" value="ECO:0000250"/>
    <property type="project" value="UniProtKB"/>
</dbReference>
<dbReference type="GO" id="GO:0045892">
    <property type="term" value="P:negative regulation of DNA-templated transcription"/>
    <property type="evidence" value="ECO:0000250"/>
    <property type="project" value="UniProtKB"/>
</dbReference>
<dbReference type="GO" id="GO:2000195">
    <property type="term" value="P:negative regulation of female gonad development"/>
    <property type="evidence" value="ECO:0000250"/>
    <property type="project" value="UniProtKB"/>
</dbReference>
<dbReference type="GO" id="GO:0044027">
    <property type="term" value="P:negative regulation of gene expression via chromosomal CpG island methylation"/>
    <property type="evidence" value="ECO:0000266"/>
    <property type="project" value="RGD"/>
</dbReference>
<dbReference type="GO" id="GO:1900212">
    <property type="term" value="P:negative regulation of mesenchymal cell apoptotic process involved in metanephros development"/>
    <property type="evidence" value="ECO:0000266"/>
    <property type="project" value="RGD"/>
</dbReference>
<dbReference type="GO" id="GO:0072302">
    <property type="term" value="P:negative regulation of metanephric glomerular mesangial cell proliferation"/>
    <property type="evidence" value="ECO:0000250"/>
    <property type="project" value="UniProtKB"/>
</dbReference>
<dbReference type="GO" id="GO:0000122">
    <property type="term" value="P:negative regulation of transcription by RNA polymerase II"/>
    <property type="evidence" value="ECO:0000266"/>
    <property type="project" value="RGD"/>
</dbReference>
<dbReference type="GO" id="GO:0017148">
    <property type="term" value="P:negative regulation of translation"/>
    <property type="evidence" value="ECO:0000250"/>
    <property type="project" value="UniProtKB"/>
</dbReference>
<dbReference type="GO" id="GO:0072015">
    <property type="term" value="P:podocyte development"/>
    <property type="evidence" value="ECO:0000266"/>
    <property type="project" value="RGD"/>
</dbReference>
<dbReference type="GO" id="GO:0072112">
    <property type="term" value="P:podocyte differentiation"/>
    <property type="evidence" value="ECO:0000250"/>
    <property type="project" value="UniProtKB"/>
</dbReference>
<dbReference type="GO" id="GO:0043065">
    <property type="term" value="P:positive regulation of apoptotic process"/>
    <property type="evidence" value="ECO:0000250"/>
    <property type="project" value="UniProtKB"/>
</dbReference>
<dbReference type="GO" id="GO:0045893">
    <property type="term" value="P:positive regulation of DNA-templated transcription"/>
    <property type="evidence" value="ECO:0000314"/>
    <property type="project" value="UniProtKB"/>
</dbReference>
<dbReference type="GO" id="GO:0010628">
    <property type="term" value="P:positive regulation of gene expression"/>
    <property type="evidence" value="ECO:0000266"/>
    <property type="project" value="RGD"/>
</dbReference>
<dbReference type="GO" id="GO:0060421">
    <property type="term" value="P:positive regulation of heart growth"/>
    <property type="evidence" value="ECO:0000250"/>
    <property type="project" value="UniProtKB"/>
</dbReference>
<dbReference type="GO" id="GO:2000020">
    <property type="term" value="P:positive regulation of male gonad development"/>
    <property type="evidence" value="ECO:0000250"/>
    <property type="project" value="UniProtKB"/>
</dbReference>
<dbReference type="GO" id="GO:2001076">
    <property type="term" value="P:positive regulation of metanephric ureteric bud development"/>
    <property type="evidence" value="ECO:0000250"/>
    <property type="project" value="UniProtKB"/>
</dbReference>
<dbReference type="GO" id="GO:1902895">
    <property type="term" value="P:positive regulation of miRNA transcription"/>
    <property type="evidence" value="ECO:0000266"/>
    <property type="project" value="RGD"/>
</dbReference>
<dbReference type="GO" id="GO:0045944">
    <property type="term" value="P:positive regulation of transcription by RNA polymerase II"/>
    <property type="evidence" value="ECO:0000315"/>
    <property type="project" value="RGD"/>
</dbReference>
<dbReference type="GO" id="GO:0072166">
    <property type="term" value="P:posterior mesonephric tubule development"/>
    <property type="evidence" value="ECO:0000250"/>
    <property type="project" value="UniProtKB"/>
</dbReference>
<dbReference type="GO" id="GO:0003156">
    <property type="term" value="P:regulation of animal organ formation"/>
    <property type="evidence" value="ECO:0000250"/>
    <property type="project" value="UniProtKB"/>
</dbReference>
<dbReference type="GO" id="GO:0006355">
    <property type="term" value="P:regulation of DNA-templated transcription"/>
    <property type="evidence" value="ECO:0000250"/>
    <property type="project" value="UniProtKB"/>
</dbReference>
<dbReference type="GO" id="GO:0010468">
    <property type="term" value="P:regulation of gene expression"/>
    <property type="evidence" value="ECO:0000266"/>
    <property type="project" value="RGD"/>
</dbReference>
<dbReference type="GO" id="GO:0006357">
    <property type="term" value="P:regulation of transcription by RNA polymerase II"/>
    <property type="evidence" value="ECO:0000250"/>
    <property type="project" value="UniProtKB"/>
</dbReference>
<dbReference type="GO" id="GO:0008380">
    <property type="term" value="P:RNA splicing"/>
    <property type="evidence" value="ECO:0000250"/>
    <property type="project" value="UniProtKB"/>
</dbReference>
<dbReference type="GO" id="GO:0072520">
    <property type="term" value="P:seminiferous tubule development"/>
    <property type="evidence" value="ECO:0000266"/>
    <property type="project" value="RGD"/>
</dbReference>
<dbReference type="GO" id="GO:0060009">
    <property type="term" value="P:Sertoli cell development"/>
    <property type="evidence" value="ECO:0000266"/>
    <property type="project" value="RGD"/>
</dbReference>
<dbReference type="GO" id="GO:0007530">
    <property type="term" value="P:sex determination"/>
    <property type="evidence" value="ECO:0000250"/>
    <property type="project" value="UniProtKB"/>
</dbReference>
<dbReference type="GO" id="GO:0007338">
    <property type="term" value="P:single fertilization"/>
    <property type="evidence" value="ECO:0000266"/>
    <property type="project" value="RGD"/>
</dbReference>
<dbReference type="GO" id="GO:0007283">
    <property type="term" value="P:spermatogenesis"/>
    <property type="evidence" value="ECO:0000266"/>
    <property type="project" value="RGD"/>
</dbReference>
<dbReference type="GO" id="GO:0007356">
    <property type="term" value="P:thorax and anterior abdomen determination"/>
    <property type="evidence" value="ECO:0000250"/>
    <property type="project" value="UniProtKB"/>
</dbReference>
<dbReference type="GO" id="GO:0009888">
    <property type="term" value="P:tissue development"/>
    <property type="evidence" value="ECO:0000250"/>
    <property type="project" value="UniProtKB"/>
</dbReference>
<dbReference type="GO" id="GO:0001657">
    <property type="term" value="P:ureteric bud development"/>
    <property type="evidence" value="ECO:0000250"/>
    <property type="project" value="UniProtKB"/>
</dbReference>
<dbReference type="GO" id="GO:0001570">
    <property type="term" value="P:vasculogenesis"/>
    <property type="evidence" value="ECO:0000250"/>
    <property type="project" value="UniProtKB"/>
</dbReference>
<dbReference type="GO" id="GO:0061032">
    <property type="term" value="P:visceral serous pericardium development"/>
    <property type="evidence" value="ECO:0000250"/>
    <property type="project" value="UniProtKB"/>
</dbReference>
<dbReference type="FunFam" id="3.30.160.60:FF:000063">
    <property type="entry name" value="Wilms tumor 1-KTS isoform"/>
    <property type="match status" value="1"/>
</dbReference>
<dbReference type="FunFam" id="3.30.160.60:FF:000228">
    <property type="entry name" value="Wilms tumor 1-KTS isoform"/>
    <property type="match status" value="1"/>
</dbReference>
<dbReference type="Gene3D" id="3.30.160.60">
    <property type="entry name" value="Classic Zinc Finger"/>
    <property type="match status" value="4"/>
</dbReference>
<dbReference type="InterPro" id="IPR000976">
    <property type="entry name" value="Wilms_tumour_N"/>
</dbReference>
<dbReference type="InterPro" id="IPR036236">
    <property type="entry name" value="Znf_C2H2_sf"/>
</dbReference>
<dbReference type="InterPro" id="IPR013087">
    <property type="entry name" value="Znf_C2H2_type"/>
</dbReference>
<dbReference type="PANTHER" id="PTHR23235:SF65">
    <property type="entry name" value="KRUEPPEL-LIKE FACTOR 11"/>
    <property type="match status" value="1"/>
</dbReference>
<dbReference type="PANTHER" id="PTHR23235">
    <property type="entry name" value="KRUEPPEL-LIKE TRANSCRIPTION FACTOR"/>
    <property type="match status" value="1"/>
</dbReference>
<dbReference type="Pfam" id="PF02165">
    <property type="entry name" value="WT1"/>
    <property type="match status" value="1"/>
</dbReference>
<dbReference type="Pfam" id="PF00096">
    <property type="entry name" value="zf-C2H2"/>
    <property type="match status" value="2"/>
</dbReference>
<dbReference type="PRINTS" id="PR00049">
    <property type="entry name" value="WILMSTUMOUR"/>
</dbReference>
<dbReference type="SMART" id="SM00355">
    <property type="entry name" value="ZnF_C2H2"/>
    <property type="match status" value="4"/>
</dbReference>
<dbReference type="SUPFAM" id="SSF57667">
    <property type="entry name" value="beta-beta-alpha zinc fingers"/>
    <property type="match status" value="2"/>
</dbReference>
<dbReference type="PROSITE" id="PS00028">
    <property type="entry name" value="ZINC_FINGER_C2H2_1"/>
    <property type="match status" value="4"/>
</dbReference>
<dbReference type="PROSITE" id="PS50157">
    <property type="entry name" value="ZINC_FINGER_C2H2_2"/>
    <property type="match status" value="4"/>
</dbReference>
<sequence>MGSDVRDLNALLPAVSSLGGGGGCGLPVSGARQWAPVLDFAPPGASAYGSLGGPAPPPAPPPPPPPPHSFIKQEPSWGGAEPHEEQCLSAFTLHFSGQFTGTAGACRYGPFGPPPPSQASSGQARMFPNAPYLPSCLESQPSIRNQGYSTVTFDGAPSYGHTPSHHAAQFPNHSFKHEDPMGQQGSLGEQQYSVPPPVYGCHTPTDSCTGSQALLLRTPYSSDNLYQMTSQLECMTWNQMNLGATLKGMAAGSSSSVKWTEGQSNHGTGYESENHTTPILCGAQYRIHTHGVFRGIQDVRRVSGVAPTLVRSASETSEKRPFMCAYPGCNKRYFKLSHLQMHSRKHTGEKPYQCDFKDCERRFSRSDQLKRHQRRHTGVKPFQCKTCQRKFSRSDHLKTHTRTHTGKTSEKPFSCRWHSCQKKFARSDELVRHHNMHQRNMTKLHVAL</sequence>
<organism>
    <name type="scientific">Rattus norvegicus</name>
    <name type="common">Rat</name>
    <dbReference type="NCBI Taxonomy" id="10116"/>
    <lineage>
        <taxon>Eukaryota</taxon>
        <taxon>Metazoa</taxon>
        <taxon>Chordata</taxon>
        <taxon>Craniata</taxon>
        <taxon>Vertebrata</taxon>
        <taxon>Euteleostomi</taxon>
        <taxon>Mammalia</taxon>
        <taxon>Eutheria</taxon>
        <taxon>Euarchontoglires</taxon>
        <taxon>Glires</taxon>
        <taxon>Rodentia</taxon>
        <taxon>Myomorpha</taxon>
        <taxon>Muroidea</taxon>
        <taxon>Muridae</taxon>
        <taxon>Murinae</taxon>
        <taxon>Rattus</taxon>
    </lineage>
</organism>
<comment type="function">
    <text evidence="2">Transcription factor that plays an important role in cellular development and cell survival. Recognizes and binds to the DNA sequence 5'-GCG(T/G)GGGCG-3'. Regulates the expression of numerous target genes, including EPO. Plays an essential role for development of the urogenital system. It has a tumor suppressor as well as an oncogenic role in tumor formation. Function may be isoform-specific: isoforms lacking the KTS motif may act as transcription factors. Isoforms containing the KTS motif may bind mRNA and play a role in mRNA metabolism or splicing. Isoform 1 has lower affinity for DNA, and can bind RNA.</text>
</comment>
<comment type="subunit">
    <text evidence="1">Interacts with ZNF224 via the zinc-finger region. Interacts with WTAP, AMER1 and SRY. Homodimer. Interacts with WTIP. Interacts with actively translating polysomes. Detected in nuclear ribonucleoprotein (mRNP) particles. Interacts with U2AF2. Interacts with HNRNPU via the zinc-finger region. Interacts with CITED2 (By similarity).</text>
</comment>
<comment type="subcellular location">
    <molecule>Isoform 1</molecule>
    <subcellularLocation>
        <location evidence="1">Nucleus speckle</location>
    </subcellularLocation>
</comment>
<comment type="subcellular location">
    <molecule>Isoform 4</molecule>
    <subcellularLocation>
        <location evidence="1">Nucleus</location>
        <location evidence="1">Nucleoplasm</location>
    </subcellularLocation>
</comment>
<comment type="subcellular location">
    <subcellularLocation>
        <location evidence="1">Nucleus</location>
    </subcellularLocation>
    <subcellularLocation>
        <location evidence="1">Nucleus</location>
        <location evidence="1">Nucleolus</location>
    </subcellularLocation>
    <subcellularLocation>
        <location evidence="1">Cytoplasm</location>
    </subcellularLocation>
    <subcellularLocation>
        <location evidence="1">Nucleus speckle</location>
    </subcellularLocation>
    <text evidence="1">Shuttles between nucleus and cytoplasm.</text>
</comment>
<comment type="alternative products">
    <event type="alternative splicing"/>
    <isoform>
        <id>P49952-1</id>
        <name>1</name>
        <sequence type="displayed"/>
    </isoform>
    <isoform>
        <id>P49952-2</id>
        <name>2</name>
        <sequence type="described" ref="VSP_006872 VSP_006873"/>
    </isoform>
    <isoform>
        <id>P49952-3</id>
        <name>3</name>
        <sequence type="described" ref="VSP_006872"/>
    </isoform>
    <isoform>
        <id>P49952-4</id>
        <name>4</name>
        <sequence type="described" ref="VSP_006873"/>
    </isoform>
</comment>
<comment type="tissue specificity">
    <text>Kidney.</text>
</comment>
<comment type="developmental stage">
    <text>Expressed during kidney development.</text>
</comment>
<comment type="domain">
    <text evidence="2">Binds to DNA motifs with the sequence 5'-GCG(T/G)GGGCG-3' via its C2H2-type zinc fingers. Starting from the N-terminus, the second zinc finger binds to the 3'-GCG motif, the middle zinc finger interacts with the central TGG motif, and the C-terminal zinc finger binds to the 5'-GCG motif. Binds double-stranded target DNA, irrespective of the cytosine methylation status. Has reduced affinity for target DNA where the cytosines have been oxidized to 5-hydroxymethylcytosine, 5-formylcytosine or 5-carboxylcytosine.</text>
</comment>
<comment type="domain">
    <text evidence="2">The 9aaTAD motif is a transactivation domain present in a large number of yeast and animal transcription factors.</text>
</comment>
<comment type="RNA editing">
    <location>
        <position position="280" evidence="5"/>
    </location>
    <text>Partially edited.</text>
</comment>
<comment type="miscellaneous">
    <text evidence="1">Presence of the KTS motif hinders interactions between DNA and zinc-finger 4.</text>
</comment>
<comment type="similarity">
    <text evidence="7">Belongs to the EGR C2H2-type zinc-finger protein family.</text>
</comment>
<gene>
    <name type="primary">Wt1</name>
    <name type="synonym">Wt-1</name>
</gene>
<accession>P49952</accession>
<feature type="chain" id="PRO_0000047134" description="Wilms tumor protein homolog">
    <location>
        <begin position="1"/>
        <end position="448"/>
    </location>
</feature>
<feature type="zinc finger region" description="C2H2-type 1" evidence="3">
    <location>
        <begin position="322"/>
        <end position="346"/>
    </location>
</feature>
<feature type="zinc finger region" description="C2H2-type 2" evidence="3">
    <location>
        <begin position="352"/>
        <end position="376"/>
    </location>
</feature>
<feature type="zinc finger region" description="C2H2-type 3" evidence="3">
    <location>
        <begin position="382"/>
        <end position="404"/>
    </location>
</feature>
<feature type="zinc finger region" description="C2H2-type 4" evidence="3">
    <location>
        <begin position="413"/>
        <end position="437"/>
    </location>
</feature>
<feature type="region of interest" description="Disordered" evidence="4">
    <location>
        <begin position="48"/>
        <end position="83"/>
    </location>
</feature>
<feature type="region of interest" description="Disordered" evidence="4">
    <location>
        <begin position="166"/>
        <end position="186"/>
    </location>
</feature>
<feature type="region of interest" description="Important for interaction with target DNA" evidence="1">
    <location>
        <begin position="366"/>
        <end position="380"/>
    </location>
</feature>
<feature type="region of interest" description="Important for interaction with target DNA" evidence="1">
    <location>
        <begin position="392"/>
        <end position="400"/>
    </location>
</feature>
<feature type="short sequence motif" description="9aaTAD" evidence="2">
    <location>
        <begin position="235"/>
        <end position="243"/>
    </location>
</feature>
<feature type="short sequence motif" description="KTS motif" evidence="1">
    <location>
        <begin position="407"/>
        <end position="409"/>
    </location>
</feature>
<feature type="compositionally biased region" description="Pro residues" evidence="4">
    <location>
        <begin position="54"/>
        <end position="68"/>
    </location>
</feature>
<feature type="site" description="Important for interaction with target DNA" evidence="1">
    <location>
        <position position="423"/>
    </location>
</feature>
<feature type="site" description="Important for interaction with target DNA" evidence="1">
    <location>
        <position position="429"/>
    </location>
</feature>
<feature type="cross-link" description="Glycyl lysine isopeptide (Lys-Gly) (interchain with G-Cter in SUMO)" evidence="1">
    <location>
        <position position="72"/>
    </location>
</feature>
<feature type="cross-link" description="Glycyl lysine isopeptide (Lys-Gly) (interchain with G-Cter in SUMO)" evidence="1">
    <location>
        <position position="176"/>
    </location>
</feature>
<feature type="cross-link" description="Glycyl lysine isopeptide (Lys-Gly) (interchain with G-Cter in SUMO2)" evidence="2">
    <location>
        <position position="443"/>
    </location>
</feature>
<feature type="splice variant" id="VSP_006872" description="In isoform 2 and isoform 3." evidence="6">
    <location>
        <begin position="249"/>
        <end position="265"/>
    </location>
</feature>
<feature type="splice variant" id="VSP_006873" description="In isoform 2 and isoform 4." evidence="6">
    <location>
        <begin position="407"/>
        <end position="409"/>
    </location>
</feature>
<feature type="sequence variant" description="In RNA edited version.">
    <original>L</original>
    <variation>P</variation>
    <location>
        <position position="280"/>
    </location>
</feature>